<reference key="1">
    <citation type="submission" date="2000-12" db="EMBL/GenBank/DDBJ databases">
        <title>Cloning of mouse uroplakin III cDNA.</title>
        <authorList>
            <person name="Kwon D.-N."/>
            <person name="Hwang K.-C."/>
            <person name="Chu H.-J."/>
        </authorList>
    </citation>
    <scope>NUCLEOTIDE SEQUENCE [MRNA]</scope>
    <source>
        <strain>ICR</strain>
        <tissue>Urinary bladder</tissue>
    </source>
</reference>
<reference key="2">
    <citation type="journal article" date="2006" name="Mol. Phylogenet. Evol.">
        <title>Origin of the tetraspanin uroplakins and their co-evolution with associated proteins: implications for uroplakin structure and function.</title>
        <authorList>
            <person name="Garcia-Espana A."/>
            <person name="Chung P.-J."/>
            <person name="Zhao X."/>
            <person name="Lee A."/>
            <person name="Pellicer A."/>
            <person name="Yu J."/>
            <person name="Sun T.-T."/>
            <person name="Desalle R."/>
        </authorList>
    </citation>
    <scope>NUCLEOTIDE SEQUENCE [MRNA]</scope>
    <source>
        <strain>Swiss Webster</strain>
        <tissue>Urinary bladder</tissue>
    </source>
</reference>
<reference key="3">
    <citation type="submission" date="2005-09" db="EMBL/GenBank/DDBJ databases">
        <authorList>
            <person name="Mural R.J."/>
            <person name="Adams M.D."/>
            <person name="Myers E.W."/>
            <person name="Smith H.O."/>
            <person name="Venter J.C."/>
        </authorList>
    </citation>
    <scope>NUCLEOTIDE SEQUENCE [LARGE SCALE GENOMIC DNA]</scope>
</reference>
<reference key="4">
    <citation type="journal article" date="2004" name="Genome Res.">
        <title>The status, quality, and expansion of the NIH full-length cDNA project: the Mammalian Gene Collection (MGC).</title>
        <authorList>
            <consortium name="The MGC Project Team"/>
        </authorList>
    </citation>
    <scope>NUCLEOTIDE SEQUENCE [LARGE SCALE MRNA]</scope>
    <source>
        <tissue>Brain</tissue>
    </source>
</reference>
<protein>
    <recommendedName>
        <fullName>Uroplakin-3a</fullName>
        <shortName>UP3a</shortName>
    </recommendedName>
    <alternativeName>
        <fullName>Uroplakin III</fullName>
        <shortName>UPIII</shortName>
    </alternativeName>
</protein>
<gene>
    <name type="primary">Upk3a</name>
    <name type="synonym">Upk3</name>
</gene>
<feature type="signal peptide" evidence="1">
    <location>
        <begin position="1"/>
        <end position="18"/>
    </location>
</feature>
<feature type="chain" id="PRO_0000022638" description="Uroplakin-3a">
    <location>
        <begin position="19"/>
        <end position="287"/>
    </location>
</feature>
<feature type="topological domain" description="Lumenal" evidence="2">
    <location>
        <begin position="19"/>
        <end position="207"/>
    </location>
</feature>
<feature type="transmembrane region" description="Helical" evidence="2">
    <location>
        <begin position="208"/>
        <end position="235"/>
    </location>
</feature>
<feature type="topological domain" description="Cytoplasmic" evidence="2">
    <location>
        <begin position="236"/>
        <end position="287"/>
    </location>
</feature>
<feature type="region of interest" description="Disordered" evidence="3">
    <location>
        <begin position="243"/>
        <end position="287"/>
    </location>
</feature>
<feature type="compositionally biased region" description="Polar residues" evidence="3">
    <location>
        <begin position="259"/>
        <end position="270"/>
    </location>
</feature>
<feature type="glycosylation site" description="N-linked (GlcNAc...) asparagine" evidence="2">
    <location>
        <position position="74"/>
    </location>
</feature>
<feature type="glycosylation site" description="N-linked (GlcNAc...) asparagine" evidence="2">
    <location>
        <position position="139"/>
    </location>
</feature>
<feature type="glycosylation site" description="N-linked (GlcNAc...) asparagine" evidence="2">
    <location>
        <position position="170"/>
    </location>
</feature>
<feature type="sequence conflict" description="In Ref. 1; AAF34681." evidence="4" ref="1">
    <original>LL</original>
    <variation>PP</variation>
    <location>
        <begin position="2"/>
        <end position="3"/>
    </location>
</feature>
<feature type="sequence conflict" description="In Ref. 1; AAF34681." evidence="4" ref="1">
    <original>W</original>
    <variation>R</variation>
    <location>
        <position position="187"/>
    </location>
</feature>
<feature type="sequence conflict" description="In Ref. 1; AAF34681." evidence="4" ref="1">
    <original>S</original>
    <variation>L</variation>
    <location>
        <position position="195"/>
    </location>
</feature>
<comment type="function">
    <text evidence="1">Component of the asymmetric unit membrane (AUM); a highly specialized biomembrane elaborated by terminally differentiated urothelial cells. May play an important role in AUM-cytoskeleton interaction in terminally differentiated urothelial cells. It also contributes to the formation of urothelial glycocalyx which may play an important role in preventing bacterial adherence (By similarity).</text>
</comment>
<comment type="subunit">
    <text evidence="1">Heterodimer with uroplakin-1B (UPK1B).</text>
</comment>
<comment type="subcellular location">
    <subcellularLocation>
        <location evidence="1">Endoplasmic reticulum membrane</location>
        <topology evidence="1">Single-pass type I membrane protein</topology>
    </subcellularLocation>
    <text evidence="1">Heterodimer formation with UPK1B is a prerequisite to exit out of the endoplasmic reticulum (ER).</text>
</comment>
<comment type="similarity">
    <text evidence="4">Belongs to the uroplakin-3 family.</text>
</comment>
<organism>
    <name type="scientific">Mus musculus</name>
    <name type="common">Mouse</name>
    <dbReference type="NCBI Taxonomy" id="10090"/>
    <lineage>
        <taxon>Eukaryota</taxon>
        <taxon>Metazoa</taxon>
        <taxon>Chordata</taxon>
        <taxon>Craniata</taxon>
        <taxon>Vertebrata</taxon>
        <taxon>Euteleostomi</taxon>
        <taxon>Mammalia</taxon>
        <taxon>Eutheria</taxon>
        <taxon>Euarchontoglires</taxon>
        <taxon>Glires</taxon>
        <taxon>Rodentia</taxon>
        <taxon>Myomorpha</taxon>
        <taxon>Muroidea</taxon>
        <taxon>Muridae</taxon>
        <taxon>Murinae</taxon>
        <taxon>Mus</taxon>
        <taxon>Mus</taxon>
    </lineage>
</organism>
<evidence type="ECO:0000250" key="1"/>
<evidence type="ECO:0000255" key="2"/>
<evidence type="ECO:0000256" key="3">
    <source>
        <dbReference type="SAM" id="MobiDB-lite"/>
    </source>
</evidence>
<evidence type="ECO:0000305" key="4"/>
<dbReference type="EMBL" id="AF222750">
    <property type="protein sequence ID" value="AAF34681.2"/>
    <property type="molecule type" value="mRNA"/>
</dbReference>
<dbReference type="EMBL" id="DQ387454">
    <property type="protein sequence ID" value="ABD52002.1"/>
    <property type="molecule type" value="mRNA"/>
</dbReference>
<dbReference type="EMBL" id="CH466550">
    <property type="protein sequence ID" value="EDL04442.1"/>
    <property type="molecule type" value="Genomic_DNA"/>
</dbReference>
<dbReference type="EMBL" id="BC125336">
    <property type="protein sequence ID" value="AAI25337.1"/>
    <property type="molecule type" value="mRNA"/>
</dbReference>
<dbReference type="EMBL" id="BC125338">
    <property type="protein sequence ID" value="AAI25339.1"/>
    <property type="molecule type" value="mRNA"/>
</dbReference>
<dbReference type="CCDS" id="CCDS27716.1"/>
<dbReference type="RefSeq" id="NP_075967.2">
    <property type="nucleotide sequence ID" value="NM_023478.2"/>
</dbReference>
<dbReference type="SMR" id="Q9JKX8"/>
<dbReference type="FunCoup" id="Q9JKX8">
    <property type="interactions" value="373"/>
</dbReference>
<dbReference type="IntAct" id="Q9JKX8">
    <property type="interactions" value="3"/>
</dbReference>
<dbReference type="MINT" id="Q9JKX8"/>
<dbReference type="STRING" id="10090.ENSMUSP00000023070"/>
<dbReference type="GlyCosmos" id="Q9JKX8">
    <property type="glycosylation" value="3 sites, No reported glycans"/>
</dbReference>
<dbReference type="GlyGen" id="Q9JKX8">
    <property type="glycosylation" value="3 sites"/>
</dbReference>
<dbReference type="iPTMnet" id="Q9JKX8"/>
<dbReference type="PhosphoSitePlus" id="Q9JKX8"/>
<dbReference type="PaxDb" id="10090-ENSMUSP00000023070"/>
<dbReference type="ProteomicsDB" id="297871"/>
<dbReference type="Antibodypedia" id="13681">
    <property type="antibodies" value="284 antibodies from 26 providers"/>
</dbReference>
<dbReference type="DNASU" id="22270"/>
<dbReference type="Ensembl" id="ENSMUST00000023070.7">
    <property type="protein sequence ID" value="ENSMUSP00000023070.6"/>
    <property type="gene ID" value="ENSMUSG00000022435.7"/>
</dbReference>
<dbReference type="GeneID" id="22270"/>
<dbReference type="KEGG" id="mmu:22270"/>
<dbReference type="UCSC" id="uc007xcs.2">
    <property type="organism name" value="mouse"/>
</dbReference>
<dbReference type="AGR" id="MGI:98914"/>
<dbReference type="CTD" id="7380"/>
<dbReference type="MGI" id="MGI:98914">
    <property type="gene designation" value="Upk3a"/>
</dbReference>
<dbReference type="VEuPathDB" id="HostDB:ENSMUSG00000022435"/>
<dbReference type="eggNOG" id="ENOG502S14V">
    <property type="taxonomic scope" value="Eukaryota"/>
</dbReference>
<dbReference type="GeneTree" id="ENSGT00940000153392"/>
<dbReference type="HOGENOM" id="CLU_082608_1_0_1"/>
<dbReference type="InParanoid" id="Q9JKX8"/>
<dbReference type="OMA" id="EKPFCVF"/>
<dbReference type="OrthoDB" id="9945328at2759"/>
<dbReference type="PhylomeDB" id="Q9JKX8"/>
<dbReference type="TreeFam" id="TF336628"/>
<dbReference type="BioGRID-ORCS" id="22270">
    <property type="hits" value="1 hit in 79 CRISPR screens"/>
</dbReference>
<dbReference type="PRO" id="PR:Q9JKX8"/>
<dbReference type="Proteomes" id="UP000000589">
    <property type="component" value="Chromosome 15"/>
</dbReference>
<dbReference type="RNAct" id="Q9JKX8">
    <property type="molecule type" value="protein"/>
</dbReference>
<dbReference type="Bgee" id="ENSMUSG00000022435">
    <property type="expression patterns" value="Expressed in urinary bladder urothelium and 54 other cell types or tissues"/>
</dbReference>
<dbReference type="GO" id="GO:0016324">
    <property type="term" value="C:apical plasma membrane"/>
    <property type="evidence" value="ECO:0000314"/>
    <property type="project" value="MGI"/>
</dbReference>
<dbReference type="GO" id="GO:0120001">
    <property type="term" value="C:apical plasma membrane urothelial plaque"/>
    <property type="evidence" value="ECO:0000314"/>
    <property type="project" value="MGI"/>
</dbReference>
<dbReference type="GO" id="GO:0005789">
    <property type="term" value="C:endoplasmic reticulum membrane"/>
    <property type="evidence" value="ECO:0007669"/>
    <property type="project" value="UniProtKB-SubCell"/>
</dbReference>
<dbReference type="GO" id="GO:0000902">
    <property type="term" value="P:cell morphogenesis"/>
    <property type="evidence" value="ECO:0000315"/>
    <property type="project" value="MGI"/>
</dbReference>
<dbReference type="GO" id="GO:0030855">
    <property type="term" value="P:epithelial cell differentiation"/>
    <property type="evidence" value="ECO:0007669"/>
    <property type="project" value="Ensembl"/>
</dbReference>
<dbReference type="GO" id="GO:0001822">
    <property type="term" value="P:kidney development"/>
    <property type="evidence" value="ECO:0000315"/>
    <property type="project" value="MGI"/>
</dbReference>
<dbReference type="GO" id="GO:0055075">
    <property type="term" value="P:potassium ion homeostasis"/>
    <property type="evidence" value="ECO:0000315"/>
    <property type="project" value="MGI"/>
</dbReference>
<dbReference type="GO" id="GO:0055078">
    <property type="term" value="P:sodium ion homeostasis"/>
    <property type="evidence" value="ECO:0000315"/>
    <property type="project" value="MGI"/>
</dbReference>
<dbReference type="GO" id="GO:0015840">
    <property type="term" value="P:urea transport"/>
    <property type="evidence" value="ECO:0000315"/>
    <property type="project" value="MGI"/>
</dbReference>
<dbReference type="GO" id="GO:0060157">
    <property type="term" value="P:urinary bladder development"/>
    <property type="evidence" value="ECO:0000315"/>
    <property type="project" value="MGI"/>
</dbReference>
<dbReference type="GO" id="GO:0006833">
    <property type="term" value="P:water transport"/>
    <property type="evidence" value="ECO:0000315"/>
    <property type="project" value="MGI"/>
</dbReference>
<dbReference type="CDD" id="cd09970">
    <property type="entry name" value="UP_IIIa"/>
    <property type="match status" value="1"/>
</dbReference>
<dbReference type="InterPro" id="IPR024831">
    <property type="entry name" value="Uroplakin-3"/>
</dbReference>
<dbReference type="InterPro" id="IPR024825">
    <property type="entry name" value="Uroplakin-3a"/>
</dbReference>
<dbReference type="PANTHER" id="PTHR15446">
    <property type="entry name" value="UROPLAKIN III"/>
    <property type="match status" value="1"/>
</dbReference>
<dbReference type="PANTHER" id="PTHR15446:SF17">
    <property type="entry name" value="UROPLAKIN-3A"/>
    <property type="match status" value="1"/>
</dbReference>
<keyword id="KW-0256">Endoplasmic reticulum</keyword>
<keyword id="KW-0325">Glycoprotein</keyword>
<keyword id="KW-0472">Membrane</keyword>
<keyword id="KW-1185">Reference proteome</keyword>
<keyword id="KW-0732">Signal</keyword>
<keyword id="KW-0812">Transmembrane</keyword>
<keyword id="KW-1133">Transmembrane helix</keyword>
<sequence length="287" mass="30990">MLLLWALLALGCLRCGWTVNLQPQLASVTFATNNPTLTTVALEKPLCMFDSSEPLSGSYEVYLYAMVDSAMSRNVSVQDSAGVPLSTTFRQTQGGRSGPYKAAAFDLTPCGDLPSLDAVGDVTQASEILNAYLVRVGNNGTCFWDPNFQGLCNPPLTAATEYRFKYVLVNMSTGLVQDQTLWSDPIWTNRPIPYSAIDTWPGRRSGGMIVITSILGSLPFFLLVGFAGAIILSFVDMGSSDGEMTHDSQITQEAVPKTLGTSEPSYSSVNRGPPLDRAEVFSSKLQD</sequence>
<proteinExistence type="evidence at transcript level"/>
<accession>Q9JKX8</accession>
<accession>Q27QV3</accession>
<name>UPK3A_MOUSE</name>